<feature type="signal peptide" evidence="3">
    <location>
        <begin position="1"/>
        <end position="24"/>
    </location>
</feature>
<feature type="chain" id="PRO_5000146882" description="Hepatitis A virus cellular receptor 1">
    <location>
        <begin position="25"/>
        <end position="478"/>
    </location>
</feature>
<feature type="topological domain" description="Extracellular" evidence="3">
    <location>
        <begin position="25"/>
        <end position="397"/>
    </location>
</feature>
<feature type="transmembrane region" description="Helical" evidence="3">
    <location>
        <begin position="398"/>
        <end position="418"/>
    </location>
</feature>
<feature type="topological domain" description="Cytoplasmic" evidence="3">
    <location>
        <begin position="419"/>
        <end position="478"/>
    </location>
</feature>
<feature type="domain" description="Ig-like V-type">
    <location>
        <begin position="25"/>
        <end position="126"/>
    </location>
</feature>
<feature type="repeat" description="1">
    <location>
        <begin position="148"/>
        <end position="155"/>
    </location>
</feature>
<feature type="repeat" description="2">
    <location>
        <begin position="156"/>
        <end position="161"/>
    </location>
</feature>
<feature type="repeat" description="3">
    <location>
        <begin position="162"/>
        <end position="167"/>
    </location>
</feature>
<feature type="repeat" description="4">
    <location>
        <begin position="168"/>
        <end position="173"/>
    </location>
</feature>
<feature type="repeat" description="5">
    <location>
        <begin position="174"/>
        <end position="179"/>
    </location>
</feature>
<feature type="repeat" description="6">
    <location>
        <begin position="180"/>
        <end position="185"/>
    </location>
</feature>
<feature type="repeat" description="7">
    <location>
        <begin position="186"/>
        <end position="191"/>
    </location>
</feature>
<feature type="repeat" description="8">
    <location>
        <begin position="192"/>
        <end position="197"/>
    </location>
</feature>
<feature type="repeat" description="9">
    <location>
        <begin position="198"/>
        <end position="201"/>
    </location>
</feature>
<feature type="repeat" description="10">
    <location>
        <begin position="202"/>
        <end position="207"/>
    </location>
</feature>
<feature type="repeat" description="11">
    <location>
        <begin position="208"/>
        <end position="211"/>
    </location>
</feature>
<feature type="repeat" description="12">
    <location>
        <begin position="212"/>
        <end position="217"/>
    </location>
</feature>
<feature type="repeat" description="13">
    <location>
        <begin position="218"/>
        <end position="221"/>
    </location>
</feature>
<feature type="repeat" description="14">
    <location>
        <begin position="222"/>
        <end position="227"/>
    </location>
</feature>
<feature type="repeat" description="15">
    <location>
        <begin position="228"/>
        <end position="233"/>
    </location>
</feature>
<feature type="repeat" description="16">
    <location>
        <begin position="234"/>
        <end position="239"/>
    </location>
</feature>
<feature type="repeat" description="17">
    <location>
        <begin position="240"/>
        <end position="245"/>
    </location>
</feature>
<feature type="repeat" description="18">
    <location>
        <begin position="246"/>
        <end position="251"/>
    </location>
</feature>
<feature type="repeat" description="19">
    <location>
        <begin position="252"/>
        <end position="257"/>
    </location>
</feature>
<feature type="repeat" description="20">
    <location>
        <begin position="258"/>
        <end position="263"/>
    </location>
</feature>
<feature type="repeat" description="21">
    <location>
        <begin position="264"/>
        <end position="268"/>
    </location>
</feature>
<feature type="repeat" description="22">
    <location>
        <begin position="269"/>
        <end position="273"/>
    </location>
</feature>
<feature type="repeat" description="23">
    <location>
        <begin position="274"/>
        <end position="279"/>
    </location>
</feature>
<feature type="repeat" description="24">
    <location>
        <begin position="280"/>
        <end position="285"/>
    </location>
</feature>
<feature type="repeat" description="25">
    <location>
        <begin position="286"/>
        <end position="291"/>
    </location>
</feature>
<feature type="repeat" description="26">
    <location>
        <begin position="292"/>
        <end position="297"/>
    </location>
</feature>
<feature type="repeat" description="27">
    <location>
        <begin position="298"/>
        <end position="303"/>
    </location>
</feature>
<feature type="repeat" description="28">
    <location>
        <begin position="304"/>
        <end position="309"/>
    </location>
</feature>
<feature type="region of interest" description="28 X 6 AA approximate tandem repeats of L-P-[MT]-T-[MT]-T">
    <location>
        <begin position="148"/>
        <end position="309"/>
    </location>
</feature>
<feature type="region of interest" description="Disordered" evidence="5">
    <location>
        <begin position="187"/>
        <end position="303"/>
    </location>
</feature>
<feature type="region of interest" description="Disordered" evidence="5">
    <location>
        <begin position="320"/>
        <end position="339"/>
    </location>
</feature>
<feature type="region of interest" description="Disordered" evidence="5">
    <location>
        <begin position="344"/>
        <end position="370"/>
    </location>
</feature>
<feature type="compositionally biased region" description="Polar residues" evidence="5">
    <location>
        <begin position="348"/>
        <end position="370"/>
    </location>
</feature>
<feature type="glycosylation site" description="N-linked (GlcNAc...) asparagine" evidence="10">
    <location>
        <position position="70"/>
    </location>
</feature>
<feature type="glycosylation site" description="N-linked (GlcNAc...) asparagine" evidence="10">
    <location>
        <position position="87"/>
    </location>
</feature>
<feature type="glycosylation site" description="N-linked (GlcNAc...) asparagine" evidence="3">
    <location>
        <position position="379"/>
    </location>
</feature>
<feature type="glycosylation site" description="N-linked (GlcNAc...) asparagine" evidence="3">
    <location>
        <position position="393"/>
    </location>
</feature>
<feature type="disulfide bond" evidence="4">
    <location>
        <begin position="41"/>
        <end position="110"/>
    </location>
</feature>
<feature type="disulfide bond" evidence="4">
    <location>
        <begin position="51"/>
        <end position="62"/>
    </location>
</feature>
<feature type="disulfide bond" evidence="4">
    <location>
        <begin position="57"/>
        <end position="109"/>
    </location>
</feature>
<feature type="splice variant" id="VSP_029086" description="In isoform short." evidence="6 7 8">
    <location>
        <begin position="1"/>
        <end position="5"/>
    </location>
</feature>
<feature type="sequence conflict" description="In Ref. 2; BAA21556." evidence="9" ref="2">
    <original>S</original>
    <variation>F</variation>
    <location>
        <position position="22"/>
    </location>
</feature>
<feature type="sequence conflict" description="In Ref. 3; AAC39771/AAC39772/AAC39773." evidence="9" ref="3">
    <original>N</original>
    <variation>H</variation>
    <location>
        <position position="53"/>
    </location>
</feature>
<feature type="sequence conflict" description="In Ref. 1; CAA66906." evidence="9" ref="1">
    <original>I</original>
    <variation>T</variation>
    <location>
        <position position="136"/>
    </location>
</feature>
<feature type="sequence conflict" description="In Ref. 1; CAA66906." evidence="9" ref="1">
    <location>
        <begin position="153"/>
        <end position="154"/>
    </location>
</feature>
<feature type="sequence conflict" description="In Ref. 1; CAA66906 and 2; BAA21556." evidence="9" ref="1 2">
    <original>M</original>
    <variation>T</variation>
    <location>
        <position position="172"/>
    </location>
</feature>
<feature type="sequence conflict" description="In Ref. 1; CAA66906." evidence="9" ref="1">
    <original>T</original>
    <variation>M</variation>
    <location>
        <position position="176"/>
    </location>
</feature>
<feature type="sequence conflict" description="In Ref. 2; BAA21556 and 1; CAA66906." evidence="9" ref="2 1">
    <original>M</original>
    <variation>T</variation>
    <location>
        <position position="194"/>
    </location>
</feature>
<feature type="sequence conflict" description="In Ref. 1; CAA66906." evidence="9" ref="1">
    <location>
        <begin position="196"/>
        <end position="209"/>
    </location>
</feature>
<feature type="sequence conflict" description="In Ref. 2; BAA21556." evidence="9" ref="2">
    <location>
        <position position="207"/>
    </location>
</feature>
<feature type="sequence conflict" description="In Ref. 3; AAC39771/AAC39772." evidence="9" ref="3">
    <location>
        <begin position="212"/>
        <end position="215"/>
    </location>
</feature>
<feature type="sequence conflict" description="In Ref. 1; CAA66906." evidence="9" ref="1">
    <original>T</original>
    <variation>M</variation>
    <location>
        <position position="224"/>
    </location>
</feature>
<feature type="sequence conflict" description="In Ref. 1; CAA66906." evidence="9" ref="1">
    <original>M</original>
    <variation>R</variation>
    <location>
        <position position="232"/>
    </location>
</feature>
<feature type="sequence conflict" description="In Ref. 1; CAA66906." evidence="9" ref="1">
    <original>M</original>
    <variation>T</variation>
    <location>
        <position position="236"/>
    </location>
</feature>
<feature type="sequence conflict" description="In Ref. 3; AAC39771/AAC39772." evidence="9" ref="3">
    <original>L</original>
    <variation>I</variation>
    <location>
        <position position="240"/>
    </location>
</feature>
<feature type="sequence conflict" description="In Ref. 2; BAA21556." evidence="9" ref="2">
    <original>T</original>
    <variation>M</variation>
    <location>
        <position position="243"/>
    </location>
</feature>
<feature type="sequence conflict" description="In Ref. 1; CAA66906." evidence="9" ref="1">
    <original>T</original>
    <variation>M</variation>
    <location>
        <position position="244"/>
    </location>
</feature>
<feature type="sequence conflict" description="In Ref. 1; CAA66906." evidence="9" ref="1">
    <original>T</original>
    <variation>M</variation>
    <location>
        <position position="248"/>
    </location>
</feature>
<feature type="sequence conflict" description="In Ref. 2; BAA21556." evidence="9" ref="2">
    <location>
        <begin position="257"/>
        <end position="268"/>
    </location>
</feature>
<feature type="sequence conflict" description="In Ref. 1; CAA66906." evidence="9" ref="1">
    <original>TMTLPMTT</original>
    <variation>MM</variation>
    <location>
        <begin position="283"/>
        <end position="290"/>
    </location>
</feature>
<feature type="sequence conflict" description="In Ref. 1; CAA66906 and 2; BAA21556." evidence="9" ref="1 2">
    <original>D</original>
    <variation>N</variation>
    <location>
        <position position="323"/>
    </location>
</feature>
<feature type="sequence conflict" description="In Ref. 1; CAA66906 and 2; BAA21556." evidence="9" ref="1 2">
    <original>A</original>
    <variation>P</variation>
    <location>
        <position position="334"/>
    </location>
</feature>
<reference key="1">
    <citation type="journal article" date="1996" name="EMBO J.">
        <title>Identification of a surface glycoprotein on African green monkey kidney cells as a receptor for hepatitis A virus.</title>
        <authorList>
            <person name="Kaplan G.G."/>
            <person name="Totsuka A."/>
            <person name="Thompson P."/>
            <person name="Akatsuka T."/>
            <person name="Moritsugu Y."/>
            <person name="Feinstone S.M."/>
        </authorList>
    </citation>
    <scope>NUCLEOTIDE SEQUENCE [MRNA] (ISOFORM SHORT)</scope>
    <scope>FUNCTION AS A HAV RECEPTOR</scope>
</reference>
<reference key="2">
    <citation type="journal article" date="1997" name="J. Gen. Virol.">
        <title>Molecular cloning of the hepatitis A virus receptor from a simian cell line.</title>
        <authorList>
            <person name="Ashida M."/>
            <person name="Hamada C."/>
        </authorList>
    </citation>
    <scope>NUCLEOTIDE SEQUENCE [MRNA] (ISOFORM SHORT)</scope>
</reference>
<reference key="3">
    <citation type="journal article" date="1998" name="J. Virol.">
        <title>Polymorphisms of the hepatitis A virus cellular receptor 1 in African green monkey kidney cells result in antigenic variants that do not react with protective monoclonal antibody 190/4.</title>
        <authorList>
            <person name="Feigelstock D."/>
            <person name="Thompson P."/>
            <person name="Mattoo P."/>
            <person name="Kaplan G.G."/>
        </authorList>
    </citation>
    <scope>NUCLEOTIDE SEQUENCE [MRNA] (ISOFORMS LONG AND SHORT)</scope>
</reference>
<reference key="4">
    <citation type="journal article" date="1998" name="J. Virol.">
        <title>The Cys-rich region of hepatitis A virus cellular receptor 1 is required for binding of hepatitis A virus and protective monoclonal antibody 190/4.</title>
        <authorList>
            <person name="Thompson P."/>
            <person name="Lu J."/>
            <person name="Kaplan G.G."/>
        </authorList>
    </citation>
    <scope>GLYCOSYLATION AT ASN-70 AND ASN-87</scope>
</reference>
<evidence type="ECO:0000250" key="1">
    <source>
        <dbReference type="UniProtKB" id="Q5QNS5"/>
    </source>
</evidence>
<evidence type="ECO:0000250" key="2">
    <source>
        <dbReference type="UniProtKB" id="Q96D42"/>
    </source>
</evidence>
<evidence type="ECO:0000255" key="3"/>
<evidence type="ECO:0000255" key="4">
    <source>
        <dbReference type="PROSITE-ProRule" id="PRU00114"/>
    </source>
</evidence>
<evidence type="ECO:0000256" key="5">
    <source>
        <dbReference type="SAM" id="MobiDB-lite"/>
    </source>
</evidence>
<evidence type="ECO:0000303" key="6">
    <source>
    </source>
</evidence>
<evidence type="ECO:0000303" key="7">
    <source>
    </source>
</evidence>
<evidence type="ECO:0000303" key="8">
    <source>
    </source>
</evidence>
<evidence type="ECO:0000305" key="9"/>
<evidence type="ECO:0000305" key="10">
    <source>
    </source>
</evidence>
<accession>O46598</accession>
<accession>O18984</accession>
<accession>O46597</accession>
<accession>Q7JJ47</accession>
<accession>Q7JJ48</accession>
<accession>Q95144</accession>
<sequence length="478" mass="51490">MADPIMHLQVVILSLILHLADSVADSVNVDGVAGLSITLPCRYNGAITSMCWNRGTCSVFSCPDGIVWTNGTHVTYRKETRYKLLGNLSRRDVSLTIANTAVSDSGIYCCRVKHSGWFNDMKITISLKIGPPRVTIPIVRTVRTSTTVPTTTTTTLPTTTTLPTTTTLPTTMTLPTTTTLPMTTTLPTTTTVPMTTTLPTTLPTTTTLPTTLPTTTTLPTTLPTTTTLPTTMTLPMTTTLPTTTTLPTTTTLPTTTTLPTTTTLPTTTLPTMTLPTTTTLPTTMTLPMTTTLPTTTTLPTTTTLPTTTMVSTFVPPTPLPMQDHEPVATSPSSAQPAETHPVTLLGATRTQPTSSPLYSYTTDGSDTVTESSDGLWNNNQTQLSPEHSPQMVNTTEGIYAGVCISVLVLLAVLGVVIAKKYFFKKEIQQLSVSFSNHQFKTLQNAVKKEVHAEDNIYIENNLYAMNQDPVVLFESLRP</sequence>
<organism>
    <name type="scientific">Chlorocebus aethiops</name>
    <name type="common">Green monkey</name>
    <name type="synonym">Cercopithecus aethiops</name>
    <dbReference type="NCBI Taxonomy" id="9534"/>
    <lineage>
        <taxon>Eukaryota</taxon>
        <taxon>Metazoa</taxon>
        <taxon>Chordata</taxon>
        <taxon>Craniata</taxon>
        <taxon>Vertebrata</taxon>
        <taxon>Euteleostomi</taxon>
        <taxon>Mammalia</taxon>
        <taxon>Eutheria</taxon>
        <taxon>Euarchontoglires</taxon>
        <taxon>Primates</taxon>
        <taxon>Haplorrhini</taxon>
        <taxon>Catarrhini</taxon>
        <taxon>Cercopithecidae</taxon>
        <taxon>Cercopithecinae</taxon>
        <taxon>Chlorocebus</taxon>
    </lineage>
</organism>
<gene>
    <name type="primary">HAVCR1</name>
    <name type="synonym">TIM1</name>
    <name type="synonym">TIMD1</name>
</gene>
<comment type="function">
    <text evidence="1 2">Phosphatidylserine receptor that plays an important functional role in regulatory B-cells homeostasis including generation, expansion and suppressor functions (By similarity). As P-selectin/SELPLG ligand, plays a specialized role in activated but not naive T-cell trafficking during inflammatory responses. Controls thereby T-cell accumulation in the inflamed central nervous system (CNS) and the induction of autoimmune disease (By similarity). Also regulates expression of various anti-inflammatory cytokines and co-inhibitory ligands including IL10. Acts as a regulator of T-cell proliferation (By similarity). May play a role in kidney injury and repair (By similarity).</text>
</comment>
<comment type="subunit">
    <text evidence="2">Interacts with STAM. Interacts with SELPLG.</text>
</comment>
<comment type="subcellular location">
    <subcellularLocation>
        <location evidence="2">Cell membrane</location>
        <topology evidence="2">Single-pass type I membrane protein</topology>
    </subcellularLocation>
</comment>
<comment type="alternative products">
    <event type="alternative splicing"/>
    <isoform>
        <id>O46598-1</id>
        <name>long</name>
        <sequence type="displayed"/>
    </isoform>
    <isoform>
        <id>O46598-2</id>
        <name>short</name>
        <sequence type="described" ref="VSP_029086"/>
    </isoform>
    <text>Experimental confirmation may be lacking for some isoforms.</text>
</comment>
<comment type="similarity">
    <text evidence="9">Belongs to the immunoglobulin superfamily. TIM family.</text>
</comment>
<name>HAVR1_CHLAE</name>
<protein>
    <recommendedName>
        <fullName>Hepatitis A virus cellular receptor 1</fullName>
        <shortName>HAVcr-1</shortName>
    </recommendedName>
    <alternativeName>
        <fullName>T-cell immunoglobulin and mucin domain-containing protein 1</fullName>
        <shortName>TIMD-1</shortName>
    </alternativeName>
    <alternativeName>
        <fullName>T-cell immunoglobulin mucin receptor 1</fullName>
        <shortName>TIM-1</shortName>
    </alternativeName>
    <alternativeName>
        <fullName>T-cell membrane protein 1</fullName>
    </alternativeName>
    <cdAntigenName>CD365</cdAntigenName>
</protein>
<dbReference type="EMBL" id="X98252">
    <property type="protein sequence ID" value="CAA66906.1"/>
    <property type="molecule type" value="mRNA"/>
</dbReference>
<dbReference type="EMBL" id="D88585">
    <property type="protein sequence ID" value="BAA21556.1"/>
    <property type="molecule type" value="mRNA"/>
</dbReference>
<dbReference type="EMBL" id="AF043446">
    <property type="protein sequence ID" value="AAC39771.1"/>
    <property type="molecule type" value="mRNA"/>
</dbReference>
<dbReference type="EMBL" id="AF043447">
    <property type="protein sequence ID" value="AAC39772.1"/>
    <property type="molecule type" value="mRNA"/>
</dbReference>
<dbReference type="EMBL" id="AF043448">
    <property type="protein sequence ID" value="AAC39773.1"/>
    <property type="molecule type" value="mRNA"/>
</dbReference>
<dbReference type="EMBL" id="AF043449">
    <property type="protein sequence ID" value="AAC39774.1"/>
    <property type="molecule type" value="mRNA"/>
</dbReference>
<dbReference type="PIR" id="S71754">
    <property type="entry name" value="S71754"/>
</dbReference>
<dbReference type="SMR" id="O46598"/>
<dbReference type="GlyCosmos" id="O46598">
    <property type="glycosylation" value="4 sites, No reported glycans"/>
</dbReference>
<dbReference type="iPTMnet" id="O46598"/>
<dbReference type="GO" id="GO:0009986">
    <property type="term" value="C:cell surface"/>
    <property type="evidence" value="ECO:0007669"/>
    <property type="project" value="TreeGrafter"/>
</dbReference>
<dbReference type="GO" id="GO:0031514">
    <property type="term" value="C:motile cilium"/>
    <property type="evidence" value="ECO:0000314"/>
    <property type="project" value="CACAO"/>
</dbReference>
<dbReference type="GO" id="GO:0005886">
    <property type="term" value="C:plasma membrane"/>
    <property type="evidence" value="ECO:0007669"/>
    <property type="project" value="UniProtKB-SubCell"/>
</dbReference>
<dbReference type="GO" id="GO:0001786">
    <property type="term" value="F:phosphatidylserine binding"/>
    <property type="evidence" value="ECO:0007669"/>
    <property type="project" value="TreeGrafter"/>
</dbReference>
<dbReference type="GO" id="GO:0001618">
    <property type="term" value="F:virus receptor activity"/>
    <property type="evidence" value="ECO:0000315"/>
    <property type="project" value="CACAO"/>
</dbReference>
<dbReference type="GO" id="GO:0006911">
    <property type="term" value="P:phagocytosis, engulfment"/>
    <property type="evidence" value="ECO:0007669"/>
    <property type="project" value="TreeGrafter"/>
</dbReference>
<dbReference type="GO" id="GO:0033005">
    <property type="term" value="P:positive regulation of mast cell activation"/>
    <property type="evidence" value="ECO:0007669"/>
    <property type="project" value="TreeGrafter"/>
</dbReference>
<dbReference type="FunFam" id="2.60.40.10:FF:000774">
    <property type="entry name" value="Hepatitis A virus cellular receptor 1"/>
    <property type="match status" value="1"/>
</dbReference>
<dbReference type="Gene3D" id="2.60.40.10">
    <property type="entry name" value="Immunoglobulins"/>
    <property type="match status" value="1"/>
</dbReference>
<dbReference type="InterPro" id="IPR007110">
    <property type="entry name" value="Ig-like_dom"/>
</dbReference>
<dbReference type="InterPro" id="IPR036179">
    <property type="entry name" value="Ig-like_dom_sf"/>
</dbReference>
<dbReference type="InterPro" id="IPR013783">
    <property type="entry name" value="Ig-like_fold"/>
</dbReference>
<dbReference type="InterPro" id="IPR003006">
    <property type="entry name" value="Ig/MHC_CS"/>
</dbReference>
<dbReference type="InterPro" id="IPR003599">
    <property type="entry name" value="Ig_sub"/>
</dbReference>
<dbReference type="InterPro" id="IPR013106">
    <property type="entry name" value="Ig_V-set"/>
</dbReference>
<dbReference type="InterPro" id="IPR052331">
    <property type="entry name" value="TIM_domain-containing_protein"/>
</dbReference>
<dbReference type="PANTHER" id="PTHR47009:SF1">
    <property type="entry name" value="HEPATITIS A VIRUS CELLULAR RECEPTOR 1"/>
    <property type="match status" value="1"/>
</dbReference>
<dbReference type="PANTHER" id="PTHR47009">
    <property type="entry name" value="HEPATITIS A VIRUS CELLULAR RECEPTOR 1 HOMOLOG"/>
    <property type="match status" value="1"/>
</dbReference>
<dbReference type="Pfam" id="PF07686">
    <property type="entry name" value="V-set"/>
    <property type="match status" value="1"/>
</dbReference>
<dbReference type="SMART" id="SM00409">
    <property type="entry name" value="IG"/>
    <property type="match status" value="1"/>
</dbReference>
<dbReference type="SUPFAM" id="SSF48726">
    <property type="entry name" value="Immunoglobulin"/>
    <property type="match status" value="1"/>
</dbReference>
<dbReference type="PROSITE" id="PS50835">
    <property type="entry name" value="IG_LIKE"/>
    <property type="match status" value="1"/>
</dbReference>
<dbReference type="PROSITE" id="PS00290">
    <property type="entry name" value="IG_MHC"/>
    <property type="match status" value="1"/>
</dbReference>
<proteinExistence type="evidence at protein level"/>
<keyword id="KW-0025">Alternative splicing</keyword>
<keyword id="KW-1003">Cell membrane</keyword>
<keyword id="KW-1015">Disulfide bond</keyword>
<keyword id="KW-0325">Glycoprotein</keyword>
<keyword id="KW-1183">Host cell receptor for virus entry</keyword>
<keyword id="KW-0945">Host-virus interaction</keyword>
<keyword id="KW-0393">Immunoglobulin domain</keyword>
<keyword id="KW-0472">Membrane</keyword>
<keyword id="KW-0675">Receptor</keyword>
<keyword id="KW-0677">Repeat</keyword>
<keyword id="KW-0732">Signal</keyword>
<keyword id="KW-0812">Transmembrane</keyword>
<keyword id="KW-1133">Transmembrane helix</keyword>